<protein>
    <recommendedName>
        <fullName evidence="1">Elongation factor G 1</fullName>
        <shortName evidence="1">EF-G 1</shortName>
    </recommendedName>
</protein>
<feature type="chain" id="PRO_0000091184" description="Elongation factor G 1">
    <location>
        <begin position="1"/>
        <end position="706"/>
    </location>
</feature>
<feature type="domain" description="tr-type G">
    <location>
        <begin position="8"/>
        <end position="290"/>
    </location>
</feature>
<feature type="binding site" evidence="1">
    <location>
        <begin position="17"/>
        <end position="24"/>
    </location>
    <ligand>
        <name>GTP</name>
        <dbReference type="ChEBI" id="CHEBI:37565"/>
    </ligand>
</feature>
<feature type="binding site" evidence="1">
    <location>
        <begin position="88"/>
        <end position="92"/>
    </location>
    <ligand>
        <name>GTP</name>
        <dbReference type="ChEBI" id="CHEBI:37565"/>
    </ligand>
</feature>
<feature type="binding site" evidence="1">
    <location>
        <begin position="142"/>
        <end position="145"/>
    </location>
    <ligand>
        <name>GTP</name>
        <dbReference type="ChEBI" id="CHEBI:37565"/>
    </ligand>
</feature>
<feature type="helix" evidence="2">
    <location>
        <begin position="7"/>
        <end position="9"/>
    </location>
</feature>
<feature type="strand" evidence="2">
    <location>
        <begin position="10"/>
        <end position="16"/>
    </location>
</feature>
<feature type="strand" evidence="2">
    <location>
        <begin position="19"/>
        <end position="21"/>
    </location>
</feature>
<feature type="helix" evidence="2">
    <location>
        <begin position="23"/>
        <end position="39"/>
    </location>
</feature>
<feature type="strand" evidence="2">
    <location>
        <begin position="67"/>
        <end position="72"/>
    </location>
</feature>
<feature type="strand" evidence="2">
    <location>
        <begin position="82"/>
        <end position="87"/>
    </location>
</feature>
<feature type="helix" evidence="2">
    <location>
        <begin position="96"/>
        <end position="105"/>
    </location>
</feature>
<feature type="strand" evidence="2">
    <location>
        <begin position="107"/>
        <end position="114"/>
    </location>
</feature>
<feature type="turn" evidence="2">
    <location>
        <begin position="115"/>
        <end position="117"/>
    </location>
</feature>
<feature type="helix" evidence="2">
    <location>
        <begin position="121"/>
        <end position="133"/>
    </location>
</feature>
<feature type="strand" evidence="2">
    <location>
        <begin position="137"/>
        <end position="142"/>
    </location>
</feature>
<feature type="strand" evidence="2">
    <location>
        <begin position="144"/>
        <end position="146"/>
    </location>
</feature>
<feature type="helix" evidence="2">
    <location>
        <begin position="151"/>
        <end position="162"/>
    </location>
</feature>
<feature type="strand" evidence="2">
    <location>
        <begin position="166"/>
        <end position="176"/>
    </location>
</feature>
<feature type="strand" evidence="2">
    <location>
        <begin position="181"/>
        <end position="184"/>
    </location>
</feature>
<feature type="turn" evidence="2">
    <location>
        <begin position="185"/>
        <end position="188"/>
    </location>
</feature>
<feature type="strand" evidence="2">
    <location>
        <begin position="189"/>
        <end position="194"/>
    </location>
</feature>
<feature type="strand" evidence="2">
    <location>
        <begin position="201"/>
        <end position="204"/>
    </location>
</feature>
<feature type="helix" evidence="2">
    <location>
        <begin position="209"/>
        <end position="227"/>
    </location>
</feature>
<feature type="helix" evidence="2">
    <location>
        <begin position="231"/>
        <end position="240"/>
    </location>
</feature>
<feature type="helix" evidence="2">
    <location>
        <begin position="245"/>
        <end position="257"/>
    </location>
</feature>
<feature type="strand" evidence="2">
    <location>
        <begin position="262"/>
        <end position="266"/>
    </location>
</feature>
<feature type="turn" evidence="2">
    <location>
        <begin position="269"/>
        <end position="272"/>
    </location>
</feature>
<feature type="helix" evidence="2">
    <location>
        <begin position="275"/>
        <end position="285"/>
    </location>
</feature>
<feature type="strand" evidence="2">
    <location>
        <begin position="318"/>
        <end position="323"/>
    </location>
</feature>
<feature type="turn" evidence="2">
    <location>
        <begin position="328"/>
        <end position="330"/>
    </location>
</feature>
<feature type="strand" evidence="2">
    <location>
        <begin position="335"/>
        <end position="341"/>
    </location>
</feature>
<feature type="turn" evidence="2">
    <location>
        <begin position="352"/>
        <end position="354"/>
    </location>
</feature>
<feature type="strand" evidence="2">
    <location>
        <begin position="373"/>
        <end position="377"/>
    </location>
</feature>
<feature type="strand" evidence="2">
    <location>
        <begin position="382"/>
        <end position="385"/>
    </location>
</feature>
<feature type="strand" evidence="2">
    <location>
        <begin position="396"/>
        <end position="398"/>
    </location>
</feature>
<feature type="strand" evidence="2">
    <location>
        <begin position="400"/>
        <end position="402"/>
    </location>
</feature>
<feature type="strand" evidence="2">
    <location>
        <begin position="415"/>
        <end position="420"/>
    </location>
</feature>
<feature type="strand" evidence="2">
    <location>
        <begin position="422"/>
        <end position="424"/>
    </location>
</feature>
<feature type="turn" evidence="2">
    <location>
        <begin position="425"/>
        <end position="427"/>
    </location>
</feature>
<feature type="helix" evidence="2">
    <location>
        <begin position="428"/>
        <end position="441"/>
    </location>
</feature>
<feature type="strand" evidence="2">
    <location>
        <begin position="446"/>
        <end position="450"/>
    </location>
</feature>
<feature type="turn" evidence="2">
    <location>
        <begin position="451"/>
        <end position="454"/>
    </location>
</feature>
<feature type="strand" evidence="2">
    <location>
        <begin position="455"/>
        <end position="461"/>
    </location>
</feature>
<feature type="helix" evidence="2">
    <location>
        <begin position="463"/>
        <end position="474"/>
    </location>
</feature>
<feature type="turn" evidence="2">
    <location>
        <begin position="475"/>
        <end position="477"/>
    </location>
</feature>
<feature type="strand" evidence="2">
    <location>
        <begin position="491"/>
        <end position="493"/>
    </location>
</feature>
<feature type="strand" evidence="2">
    <location>
        <begin position="498"/>
        <end position="509"/>
    </location>
</feature>
<feature type="strand" evidence="2">
    <location>
        <begin position="512"/>
        <end position="523"/>
    </location>
</feature>
<feature type="strand" evidence="2">
    <location>
        <begin position="536"/>
        <end position="541"/>
    </location>
</feature>
<feature type="helix" evidence="2">
    <location>
        <begin position="550"/>
        <end position="552"/>
    </location>
</feature>
<feature type="helix" evidence="2">
    <location>
        <begin position="553"/>
        <end position="566"/>
    </location>
</feature>
<feature type="strand" evidence="2">
    <location>
        <begin position="568"/>
        <end position="571"/>
    </location>
</feature>
<feature type="strand" evidence="2">
    <location>
        <begin position="574"/>
        <end position="583"/>
    </location>
</feature>
<feature type="turn" evidence="2">
    <location>
        <begin position="588"/>
        <end position="590"/>
    </location>
</feature>
<feature type="helix" evidence="2">
    <location>
        <begin position="593"/>
        <end position="605"/>
    </location>
</feature>
<feature type="helix" evidence="2">
    <location>
        <begin position="607"/>
        <end position="610"/>
    </location>
</feature>
<feature type="strand" evidence="2">
    <location>
        <begin position="614"/>
        <end position="627"/>
    </location>
</feature>
<feature type="turn" evidence="2">
    <location>
        <begin position="628"/>
        <end position="630"/>
    </location>
</feature>
<feature type="helix" evidence="2">
    <location>
        <begin position="631"/>
        <end position="638"/>
    </location>
</feature>
<feature type="helix" evidence="2">
    <location>
        <begin position="639"/>
        <end position="641"/>
    </location>
</feature>
<feature type="strand" evidence="2">
    <location>
        <begin position="644"/>
        <end position="650"/>
    </location>
</feature>
<feature type="strand" evidence="2">
    <location>
        <begin position="652"/>
        <end position="663"/>
    </location>
</feature>
<feature type="helix" evidence="2">
    <location>
        <begin position="664"/>
        <end position="666"/>
    </location>
</feature>
<feature type="helix" evidence="2">
    <location>
        <begin position="669"/>
        <end position="676"/>
    </location>
</feature>
<feature type="turn" evidence="2">
    <location>
        <begin position="677"/>
        <end position="679"/>
    </location>
</feature>
<feature type="strand" evidence="2">
    <location>
        <begin position="682"/>
        <end position="684"/>
    </location>
</feature>
<feature type="strand" evidence="2">
    <location>
        <begin position="687"/>
        <end position="692"/>
    </location>
</feature>
<feature type="helix" evidence="2">
    <location>
        <begin position="695"/>
        <end position="703"/>
    </location>
</feature>
<organism>
    <name type="scientific">Pseudomonas aeruginosa (strain ATCC 15692 / DSM 22644 / CIP 104116 / JCM 14847 / LMG 12228 / 1C / PRS 101 / PAO1)</name>
    <dbReference type="NCBI Taxonomy" id="208964"/>
    <lineage>
        <taxon>Bacteria</taxon>
        <taxon>Pseudomonadati</taxon>
        <taxon>Pseudomonadota</taxon>
        <taxon>Gammaproteobacteria</taxon>
        <taxon>Pseudomonadales</taxon>
        <taxon>Pseudomonadaceae</taxon>
        <taxon>Pseudomonas</taxon>
    </lineage>
</organism>
<name>EFG1_PSEAE</name>
<reference key="1">
    <citation type="journal article" date="2000" name="Nature">
        <title>Complete genome sequence of Pseudomonas aeruginosa PAO1, an opportunistic pathogen.</title>
        <authorList>
            <person name="Stover C.K."/>
            <person name="Pham X.-Q.T."/>
            <person name="Erwin A.L."/>
            <person name="Mizoguchi S.D."/>
            <person name="Warrener P."/>
            <person name="Hickey M.J."/>
            <person name="Brinkman F.S.L."/>
            <person name="Hufnagle W.O."/>
            <person name="Kowalik D.J."/>
            <person name="Lagrou M."/>
            <person name="Garber R.L."/>
            <person name="Goltry L."/>
            <person name="Tolentino E."/>
            <person name="Westbrock-Wadman S."/>
            <person name="Yuan Y."/>
            <person name="Brody L.L."/>
            <person name="Coulter S.N."/>
            <person name="Folger K.R."/>
            <person name="Kas A."/>
            <person name="Larbig K."/>
            <person name="Lim R.M."/>
            <person name="Smith K.A."/>
            <person name="Spencer D.H."/>
            <person name="Wong G.K.-S."/>
            <person name="Wu Z."/>
            <person name="Paulsen I.T."/>
            <person name="Reizer J."/>
            <person name="Saier M.H. Jr."/>
            <person name="Hancock R.E.W."/>
            <person name="Lory S."/>
            <person name="Olson M.V."/>
        </authorList>
    </citation>
    <scope>NUCLEOTIDE SEQUENCE [LARGE SCALE GENOMIC DNA]</scope>
    <source>
        <strain>ATCC 15692 / DSM 22644 / CIP 104116 / JCM 14847 / LMG 12228 / 1C / PRS 101 / PAO1</strain>
    </source>
</reference>
<sequence length="706" mass="77784">MARTTPINRYRNIGICAHVDAGKTTTTERVLFYTGVNHKLGEVHDGAATTDWMVQEQERGITITSAAVTTFWKGSRGQYDNYRVNVIDTPGHVDFTIEVERSLRVLDGAVVVFCGTSGVEPQSETVWRQANKYGVPRIVYVNKMDRQGANFLRVVEQIKKRLGHTPVPVQLAIGAEENFVGQVDLIKMKAIYWNDDDKGMTYREEEIPAELKDLAEEWRSSMVEAAAEANEELMNKYLEEGELSEAEIKEGLRLRTLACEIVPAVCGSSFKNKGVPLVLDAVIDYLPAPTEIPAIKGVSPDDETVEDERHADDNEPFSSLAFKIATDPFVGTLTFARVYSGVLSSGDSVLNSVKGKKERVGRMVQMHANQREEIKEVRAGDIAALIGMKDVTTGDTLCSIEKPIILERMDFPEPVISVAVEPKTKADQEKMGIALGKLAQEDPSFRVKTDEESGQTIISGMGELHLDIIVDRMKREFGVEANIGKPQVAYRETITKDNVEIEGKFVRQSGGRGQFGHCWIRFSAADVDEKGNITEGLVFENEVVGGVVPKEYIPAIQKGIEEQMKNGVVAGYPLIGLKATVFDGSYHDVDSNEMAFKIAASMATKQLAQKGGGKVLEPIMKVEVVTPEDYMGDVMGDLNRRRGLIQGMEDTVSGKVIRAEVPLGEMFGYATDVRSMSQGRASYSMEFSKYAEAPSNIVEALVKKQG</sequence>
<gene>
    <name evidence="1" type="primary">fusA</name>
    <name type="synonym">fusA1</name>
    <name type="ordered locus">PA4266</name>
</gene>
<keyword id="KW-0002">3D-structure</keyword>
<keyword id="KW-0963">Cytoplasm</keyword>
<keyword id="KW-0251">Elongation factor</keyword>
<keyword id="KW-0342">GTP-binding</keyword>
<keyword id="KW-0547">Nucleotide-binding</keyword>
<keyword id="KW-0648">Protein biosynthesis</keyword>
<keyword id="KW-1185">Reference proteome</keyword>
<comment type="function">
    <text evidence="1">Catalyzes the GTP-dependent ribosomal translocation step during translation elongation. During this step, the ribosome changes from the pre-translocational (PRE) to the post-translocational (POST) state as the newly formed A-site-bound peptidyl-tRNA and P-site-bound deacylated tRNA move to the P and E sites, respectively. Catalyzes the coordinated movement of the two tRNA molecules, the mRNA and conformational changes in the ribosome.</text>
</comment>
<comment type="subcellular location">
    <subcellularLocation>
        <location evidence="1">Cytoplasm</location>
    </subcellularLocation>
</comment>
<comment type="similarity">
    <text evidence="1">Belongs to the TRAFAC class translation factor GTPase superfamily. Classic translation factor GTPase family. EF-G/EF-2 subfamily.</text>
</comment>
<accession>Q9HWD2</accession>
<evidence type="ECO:0000255" key="1">
    <source>
        <dbReference type="HAMAP-Rule" id="MF_00054"/>
    </source>
</evidence>
<evidence type="ECO:0007829" key="2">
    <source>
        <dbReference type="PDB" id="4FN5"/>
    </source>
</evidence>
<dbReference type="EMBL" id="AE004091">
    <property type="protein sequence ID" value="AAG07654.1"/>
    <property type="molecule type" value="Genomic_DNA"/>
</dbReference>
<dbReference type="PIR" id="D83112">
    <property type="entry name" value="D83112"/>
</dbReference>
<dbReference type="RefSeq" id="NP_252956.1">
    <property type="nucleotide sequence ID" value="NC_002516.2"/>
</dbReference>
<dbReference type="RefSeq" id="WP_003093741.1">
    <property type="nucleotide sequence ID" value="NZ_QZGE01000028.1"/>
</dbReference>
<dbReference type="PDB" id="4FN5">
    <property type="method" value="X-ray"/>
    <property type="resolution" value="2.90 A"/>
    <property type="chains" value="A=1-706"/>
</dbReference>
<dbReference type="PDBsum" id="4FN5"/>
<dbReference type="SMR" id="Q9HWD2"/>
<dbReference type="FunCoup" id="Q9HWD2">
    <property type="interactions" value="796"/>
</dbReference>
<dbReference type="STRING" id="208964.PA4266"/>
<dbReference type="PaxDb" id="208964-PA4266"/>
<dbReference type="DNASU" id="881744"/>
<dbReference type="GeneID" id="881744"/>
<dbReference type="KEGG" id="pae:PA4266"/>
<dbReference type="PATRIC" id="fig|208964.12.peg.4467"/>
<dbReference type="PseudoCAP" id="PA4266"/>
<dbReference type="HOGENOM" id="CLU_002794_4_1_6"/>
<dbReference type="InParanoid" id="Q9HWD2"/>
<dbReference type="OrthoDB" id="9804431at2"/>
<dbReference type="PhylomeDB" id="Q9HWD2"/>
<dbReference type="BioCyc" id="PAER208964:G1FZ6-4339-MONOMER"/>
<dbReference type="EvolutionaryTrace" id="Q9HWD2"/>
<dbReference type="Proteomes" id="UP000002438">
    <property type="component" value="Chromosome"/>
</dbReference>
<dbReference type="GO" id="GO:0005829">
    <property type="term" value="C:cytosol"/>
    <property type="evidence" value="ECO:0000318"/>
    <property type="project" value="GO_Central"/>
</dbReference>
<dbReference type="GO" id="GO:0005525">
    <property type="term" value="F:GTP binding"/>
    <property type="evidence" value="ECO:0007669"/>
    <property type="project" value="UniProtKB-UniRule"/>
</dbReference>
<dbReference type="GO" id="GO:0003924">
    <property type="term" value="F:GTPase activity"/>
    <property type="evidence" value="ECO:0007669"/>
    <property type="project" value="InterPro"/>
</dbReference>
<dbReference type="GO" id="GO:0097216">
    <property type="term" value="F:guanosine tetraphosphate binding"/>
    <property type="evidence" value="ECO:0007669"/>
    <property type="project" value="UniProtKB-ARBA"/>
</dbReference>
<dbReference type="GO" id="GO:0003746">
    <property type="term" value="F:translation elongation factor activity"/>
    <property type="evidence" value="ECO:0007669"/>
    <property type="project" value="UniProtKB-UniRule"/>
</dbReference>
<dbReference type="GO" id="GO:0032790">
    <property type="term" value="P:ribosome disassembly"/>
    <property type="evidence" value="ECO:0000318"/>
    <property type="project" value="GO_Central"/>
</dbReference>
<dbReference type="CDD" id="cd01886">
    <property type="entry name" value="EF-G"/>
    <property type="match status" value="1"/>
</dbReference>
<dbReference type="CDD" id="cd16262">
    <property type="entry name" value="EFG_III"/>
    <property type="match status" value="1"/>
</dbReference>
<dbReference type="CDD" id="cd01434">
    <property type="entry name" value="EFG_mtEFG1_IV"/>
    <property type="match status" value="1"/>
</dbReference>
<dbReference type="CDD" id="cd03713">
    <property type="entry name" value="EFG_mtEFG_C"/>
    <property type="match status" value="1"/>
</dbReference>
<dbReference type="CDD" id="cd04088">
    <property type="entry name" value="EFG_mtEFG_II"/>
    <property type="match status" value="1"/>
</dbReference>
<dbReference type="FunFam" id="2.40.30.10:FF:000006">
    <property type="entry name" value="Elongation factor G"/>
    <property type="match status" value="1"/>
</dbReference>
<dbReference type="FunFam" id="3.30.230.10:FF:000003">
    <property type="entry name" value="Elongation factor G"/>
    <property type="match status" value="1"/>
</dbReference>
<dbReference type="FunFam" id="3.30.70.240:FF:000001">
    <property type="entry name" value="Elongation factor G"/>
    <property type="match status" value="1"/>
</dbReference>
<dbReference type="FunFam" id="3.30.70.870:FF:000001">
    <property type="entry name" value="Elongation factor G"/>
    <property type="match status" value="1"/>
</dbReference>
<dbReference type="FunFam" id="3.40.50.300:FF:000029">
    <property type="entry name" value="Elongation factor G"/>
    <property type="match status" value="1"/>
</dbReference>
<dbReference type="Gene3D" id="3.30.230.10">
    <property type="match status" value="1"/>
</dbReference>
<dbReference type="Gene3D" id="3.30.70.240">
    <property type="match status" value="1"/>
</dbReference>
<dbReference type="Gene3D" id="3.30.70.870">
    <property type="entry name" value="Elongation Factor G (Translational Gtpase), domain 3"/>
    <property type="match status" value="1"/>
</dbReference>
<dbReference type="Gene3D" id="3.40.50.300">
    <property type="entry name" value="P-loop containing nucleotide triphosphate hydrolases"/>
    <property type="match status" value="1"/>
</dbReference>
<dbReference type="Gene3D" id="2.40.30.10">
    <property type="entry name" value="Translation factors"/>
    <property type="match status" value="1"/>
</dbReference>
<dbReference type="HAMAP" id="MF_00054_B">
    <property type="entry name" value="EF_G_EF_2_B"/>
    <property type="match status" value="1"/>
</dbReference>
<dbReference type="InterPro" id="IPR041095">
    <property type="entry name" value="EFG_II"/>
</dbReference>
<dbReference type="InterPro" id="IPR009022">
    <property type="entry name" value="EFG_III"/>
</dbReference>
<dbReference type="InterPro" id="IPR035647">
    <property type="entry name" value="EFG_III/V"/>
</dbReference>
<dbReference type="InterPro" id="IPR047872">
    <property type="entry name" value="EFG_IV"/>
</dbReference>
<dbReference type="InterPro" id="IPR035649">
    <property type="entry name" value="EFG_V"/>
</dbReference>
<dbReference type="InterPro" id="IPR000640">
    <property type="entry name" value="EFG_V-like"/>
</dbReference>
<dbReference type="InterPro" id="IPR004161">
    <property type="entry name" value="EFTu-like_2"/>
</dbReference>
<dbReference type="InterPro" id="IPR031157">
    <property type="entry name" value="G_TR_CS"/>
</dbReference>
<dbReference type="InterPro" id="IPR027417">
    <property type="entry name" value="P-loop_NTPase"/>
</dbReference>
<dbReference type="InterPro" id="IPR020568">
    <property type="entry name" value="Ribosomal_Su5_D2-typ_SF"/>
</dbReference>
<dbReference type="InterPro" id="IPR014721">
    <property type="entry name" value="Ribsml_uS5_D2-typ_fold_subgr"/>
</dbReference>
<dbReference type="InterPro" id="IPR005225">
    <property type="entry name" value="Small_GTP-bd"/>
</dbReference>
<dbReference type="InterPro" id="IPR000795">
    <property type="entry name" value="T_Tr_GTP-bd_dom"/>
</dbReference>
<dbReference type="InterPro" id="IPR009000">
    <property type="entry name" value="Transl_B-barrel_sf"/>
</dbReference>
<dbReference type="InterPro" id="IPR004540">
    <property type="entry name" value="Transl_elong_EFG/EF2"/>
</dbReference>
<dbReference type="InterPro" id="IPR005517">
    <property type="entry name" value="Transl_elong_EFG/EF2_IV"/>
</dbReference>
<dbReference type="NCBIfam" id="TIGR00484">
    <property type="entry name" value="EF-G"/>
    <property type="match status" value="1"/>
</dbReference>
<dbReference type="NCBIfam" id="NF009381">
    <property type="entry name" value="PRK12740.1-5"/>
    <property type="match status" value="1"/>
</dbReference>
<dbReference type="NCBIfam" id="TIGR00231">
    <property type="entry name" value="small_GTP"/>
    <property type="match status" value="1"/>
</dbReference>
<dbReference type="PANTHER" id="PTHR43261:SF1">
    <property type="entry name" value="RIBOSOME-RELEASING FACTOR 2, MITOCHONDRIAL"/>
    <property type="match status" value="1"/>
</dbReference>
<dbReference type="PANTHER" id="PTHR43261">
    <property type="entry name" value="TRANSLATION ELONGATION FACTOR G-RELATED"/>
    <property type="match status" value="1"/>
</dbReference>
<dbReference type="Pfam" id="PF00679">
    <property type="entry name" value="EFG_C"/>
    <property type="match status" value="1"/>
</dbReference>
<dbReference type="Pfam" id="PF14492">
    <property type="entry name" value="EFG_III"/>
    <property type="match status" value="1"/>
</dbReference>
<dbReference type="Pfam" id="PF03764">
    <property type="entry name" value="EFG_IV"/>
    <property type="match status" value="1"/>
</dbReference>
<dbReference type="Pfam" id="PF00009">
    <property type="entry name" value="GTP_EFTU"/>
    <property type="match status" value="1"/>
</dbReference>
<dbReference type="Pfam" id="PF03144">
    <property type="entry name" value="GTP_EFTU_D2"/>
    <property type="match status" value="1"/>
</dbReference>
<dbReference type="PRINTS" id="PR00315">
    <property type="entry name" value="ELONGATNFCT"/>
</dbReference>
<dbReference type="SMART" id="SM00838">
    <property type="entry name" value="EFG_C"/>
    <property type="match status" value="1"/>
</dbReference>
<dbReference type="SMART" id="SM00889">
    <property type="entry name" value="EFG_IV"/>
    <property type="match status" value="1"/>
</dbReference>
<dbReference type="SUPFAM" id="SSF54980">
    <property type="entry name" value="EF-G C-terminal domain-like"/>
    <property type="match status" value="2"/>
</dbReference>
<dbReference type="SUPFAM" id="SSF52540">
    <property type="entry name" value="P-loop containing nucleoside triphosphate hydrolases"/>
    <property type="match status" value="1"/>
</dbReference>
<dbReference type="SUPFAM" id="SSF54211">
    <property type="entry name" value="Ribosomal protein S5 domain 2-like"/>
    <property type="match status" value="1"/>
</dbReference>
<dbReference type="SUPFAM" id="SSF50447">
    <property type="entry name" value="Translation proteins"/>
    <property type="match status" value="1"/>
</dbReference>
<dbReference type="PROSITE" id="PS00301">
    <property type="entry name" value="G_TR_1"/>
    <property type="match status" value="1"/>
</dbReference>
<dbReference type="PROSITE" id="PS51722">
    <property type="entry name" value="G_TR_2"/>
    <property type="match status" value="1"/>
</dbReference>
<proteinExistence type="evidence at protein level"/>